<feature type="chain" id="PRO_0000190088" description="Cyclin-dependent kinase inhibitor 1C">
    <location>
        <begin position="1"/>
        <end position="348"/>
    </location>
</feature>
<feature type="region of interest" description="Disordered" evidence="3">
    <location>
        <begin position="115"/>
        <end position="348"/>
    </location>
</feature>
<feature type="short sequence motif" description="Nuclear localization signal" evidence="2">
    <location>
        <begin position="309"/>
        <end position="312"/>
    </location>
</feature>
<feature type="compositionally biased region" description="Acidic residues" evidence="3">
    <location>
        <begin position="207"/>
        <end position="220"/>
    </location>
</feature>
<feature type="compositionally biased region" description="Acidic residues" evidence="3">
    <location>
        <begin position="227"/>
        <end position="274"/>
    </location>
</feature>
<feature type="compositionally biased region" description="Basic and acidic residues" evidence="3">
    <location>
        <begin position="275"/>
        <end position="284"/>
    </location>
</feature>
<feature type="modified residue" description="Omega-N-methylarginine" evidence="5">
    <location>
        <position position="109"/>
    </location>
</feature>
<feature type="splice variant" id="VSP_000868" description="In isoform KIP2b." evidence="4">
    <location>
        <begin position="1"/>
        <end position="13"/>
    </location>
</feature>
<feature type="sequence conflict" description="In Ref. 1; AAC52186." evidence="4" ref="1">
    <original>EP</original>
    <variation>DA</variation>
    <location>
        <begin position="150"/>
        <end position="151"/>
    </location>
</feature>
<accession>P49919</accession>
<accession>G3UW61</accession>
<proteinExistence type="evidence at protein level"/>
<gene>
    <name type="primary">Cdkn1c</name>
    <name type="synonym">Kip2</name>
</gene>
<sequence>MGMSDVYLRSRTAMERLASSDTFPVIARSSACRSLFGPVDHEELGRELRMRLAELNAEDQNRWDFNFQQDVPLRGPGRLQWMEVDSESVPAFYRETVQVGRCRLQLGPRPPPVAVAVIPRSGPPAGEAPDGLEEAPEQPPSAPASAVVAEPTPPATPAPASDLTSDPIPEVTLVATSDPTPDPIPDANPDVATRDGEEQVPEQVSEQGEESGAEPGDELGTEPVSEQGEEQGAEPVEEKDEEPEEEQGAEPVEEQGAEPVEEQNGEPVEEQDENQEQRGQELKDQPLSGIPGRPAPGTAAANANDFFAKRKRTAQENKASNDVPPGCPSPNVAPGVGAVEQTPRKRLR</sequence>
<name>CDN1C_MOUSE</name>
<reference key="1">
    <citation type="journal article" date="1995" name="Genes Dev.">
        <title>Cloning of p57KIP2, a cyclin-dependent kinase inhibitor with unique domain structure and tissue distribution.</title>
        <authorList>
            <person name="Lee M.-H."/>
            <person name="Reynisdottir I."/>
            <person name="Massague J."/>
        </authorList>
    </citation>
    <scope>NUCLEOTIDE SEQUENCE [MRNA]</scope>
    <source>
        <tissue>Embryo</tissue>
    </source>
</reference>
<reference key="2">
    <citation type="journal article" date="2009" name="PLoS Biol.">
        <title>Lineage-specific biology revealed by a finished genome assembly of the mouse.</title>
        <authorList>
            <person name="Church D.M."/>
            <person name="Goodstadt L."/>
            <person name="Hillier L.W."/>
            <person name="Zody M.C."/>
            <person name="Goldstein S."/>
            <person name="She X."/>
            <person name="Bult C.J."/>
            <person name="Agarwala R."/>
            <person name="Cherry J.L."/>
            <person name="DiCuccio M."/>
            <person name="Hlavina W."/>
            <person name="Kapustin Y."/>
            <person name="Meric P."/>
            <person name="Maglott D."/>
            <person name="Birtle Z."/>
            <person name="Marques A.C."/>
            <person name="Graves T."/>
            <person name="Zhou S."/>
            <person name="Teague B."/>
            <person name="Potamousis K."/>
            <person name="Churas C."/>
            <person name="Place M."/>
            <person name="Herschleb J."/>
            <person name="Runnheim R."/>
            <person name="Forrest D."/>
            <person name="Amos-Landgraf J."/>
            <person name="Schwartz D.C."/>
            <person name="Cheng Z."/>
            <person name="Lindblad-Toh K."/>
            <person name="Eichler E.E."/>
            <person name="Ponting C.P."/>
        </authorList>
    </citation>
    <scope>NUCLEOTIDE SEQUENCE [LARGE SCALE GENOMIC DNA]</scope>
    <source>
        <strain>C57BL/6J</strain>
    </source>
</reference>
<reference key="3">
    <citation type="submission" date="2005-07" db="EMBL/GenBank/DDBJ databases">
        <authorList>
            <person name="Mural R.J."/>
            <person name="Adams M.D."/>
            <person name="Myers E.W."/>
            <person name="Smith H.O."/>
            <person name="Venter J.C."/>
        </authorList>
    </citation>
    <scope>NUCLEOTIDE SEQUENCE [LARGE SCALE GENOMIC DNA]</scope>
</reference>
<reference key="4">
    <citation type="journal article" date="1995" name="Genes Dev.">
        <title>p57KIP2, a structurally distinct member of the p21CIP1 Cdk inhibitor family, is a candidate tumor suppressor gene.</title>
        <authorList>
            <person name="Matsuoka S."/>
            <person name="Edwards M.C."/>
            <person name="Bai C."/>
            <person name="Parker S."/>
            <person name="Zhang P."/>
            <person name="Baldini A."/>
            <person name="Harper J.W."/>
            <person name="Elledge S.J."/>
        </authorList>
    </citation>
    <scope>NUCLEOTIDE SEQUENCE [MRNA] OF 14-348</scope>
</reference>
<reference key="5">
    <citation type="journal article" date="2014" name="Mol. Cell. Proteomics">
        <title>Immunoaffinity enrichment and mass spectrometry analysis of protein methylation.</title>
        <authorList>
            <person name="Guo A."/>
            <person name="Gu H."/>
            <person name="Zhou J."/>
            <person name="Mulhern D."/>
            <person name="Wang Y."/>
            <person name="Lee K.A."/>
            <person name="Yang V."/>
            <person name="Aguiar M."/>
            <person name="Kornhauser J."/>
            <person name="Jia X."/>
            <person name="Ren J."/>
            <person name="Beausoleil S.A."/>
            <person name="Silva J.C."/>
            <person name="Vemulapalli V."/>
            <person name="Bedford M.T."/>
            <person name="Comb M.J."/>
        </authorList>
    </citation>
    <scope>METHYLATION [LARGE SCALE ANALYSIS] AT ARG-109</scope>
    <scope>IDENTIFICATION BY MASS SPECTROMETRY [LARGE SCALE ANALYSIS]</scope>
    <source>
        <tissue>Embryo</tissue>
    </source>
</reference>
<dbReference type="EMBL" id="U20553">
    <property type="protein sequence ID" value="AAC52186.1"/>
    <property type="molecule type" value="mRNA"/>
</dbReference>
<dbReference type="EMBL" id="AC023248">
    <property type="status" value="NOT_ANNOTATED_CDS"/>
    <property type="molecule type" value="Genomic_DNA"/>
</dbReference>
<dbReference type="EMBL" id="CH466531">
    <property type="protein sequence ID" value="EDL18208.1"/>
    <property type="molecule type" value="Genomic_DNA"/>
</dbReference>
<dbReference type="EMBL" id="U22399">
    <property type="protein sequence ID" value="AAA85096.1"/>
    <property type="molecule type" value="mRNA"/>
</dbReference>
<dbReference type="CCDS" id="CCDS22040.1">
    <molecule id="P49919-2"/>
</dbReference>
<dbReference type="CCDS" id="CCDS52463.1">
    <molecule id="P49919-1"/>
</dbReference>
<dbReference type="PIR" id="I49262">
    <property type="entry name" value="I49262"/>
</dbReference>
<dbReference type="RefSeq" id="NP_001155096.1">
    <molecule id="P49919-1"/>
    <property type="nucleotide sequence ID" value="NM_001161624.2"/>
</dbReference>
<dbReference type="RefSeq" id="NP_001341910.1">
    <molecule id="P49919-2"/>
    <property type="nucleotide sequence ID" value="NM_001354981.2"/>
</dbReference>
<dbReference type="RefSeq" id="NP_001399161.1">
    <molecule id="P49919-1"/>
    <property type="nucleotide sequence ID" value="NM_001412232.1"/>
</dbReference>
<dbReference type="RefSeq" id="NP_001399166.1">
    <molecule id="P49919-2"/>
    <property type="nucleotide sequence ID" value="NM_001412237.1"/>
</dbReference>
<dbReference type="RefSeq" id="NP_001399167.1">
    <molecule id="P49919-2"/>
    <property type="nucleotide sequence ID" value="NM_001412238.1"/>
</dbReference>
<dbReference type="RefSeq" id="NP_034006.3">
    <molecule id="P49919-2"/>
    <property type="nucleotide sequence ID" value="NM_009876.4"/>
</dbReference>
<dbReference type="RefSeq" id="XP_006508534.1">
    <property type="nucleotide sequence ID" value="XM_006508471.3"/>
</dbReference>
<dbReference type="BioGRID" id="198653">
    <property type="interactions" value="2"/>
</dbReference>
<dbReference type="ELM" id="P49919"/>
<dbReference type="FunCoup" id="P49919">
    <property type="interactions" value="397"/>
</dbReference>
<dbReference type="STRING" id="10090.ENSMUSP00000128828"/>
<dbReference type="GlyGen" id="P49919">
    <property type="glycosylation" value="3 sites"/>
</dbReference>
<dbReference type="iPTMnet" id="P49919"/>
<dbReference type="PhosphoSitePlus" id="P49919"/>
<dbReference type="PaxDb" id="10090-ENSMUSP00000128828"/>
<dbReference type="PeptideAtlas" id="P49919"/>
<dbReference type="ProteomicsDB" id="281356">
    <molecule id="P49919-1"/>
</dbReference>
<dbReference type="ProteomicsDB" id="281357">
    <molecule id="P49919-2"/>
</dbReference>
<dbReference type="Antibodypedia" id="972">
    <property type="antibodies" value="1220 antibodies from 42 providers"/>
</dbReference>
<dbReference type="DNASU" id="12577"/>
<dbReference type="Ensembl" id="ENSMUST00000037287.8">
    <molecule id="P49919-2"/>
    <property type="protein sequence ID" value="ENSMUSP00000037302.7"/>
    <property type="gene ID" value="ENSMUSG00000037664.14"/>
</dbReference>
<dbReference type="Ensembl" id="ENSMUST00000167912.9">
    <molecule id="P49919-1"/>
    <property type="protein sequence ID" value="ENSMUSP00000128828.2"/>
    <property type="gene ID" value="ENSMUSG00000037664.14"/>
</dbReference>
<dbReference type="GeneID" id="12577"/>
<dbReference type="KEGG" id="mmu:12577"/>
<dbReference type="UCSC" id="uc009kpd.2">
    <molecule id="P49919-1"/>
    <property type="organism name" value="mouse"/>
</dbReference>
<dbReference type="AGR" id="MGI:104564"/>
<dbReference type="CTD" id="1028"/>
<dbReference type="MGI" id="MGI:104564">
    <property type="gene designation" value="Cdkn1c"/>
</dbReference>
<dbReference type="VEuPathDB" id="HostDB:ENSMUSG00000037664"/>
<dbReference type="eggNOG" id="KOG4743">
    <property type="taxonomic scope" value="Eukaryota"/>
</dbReference>
<dbReference type="GeneTree" id="ENSGT00940000162677"/>
<dbReference type="HOGENOM" id="CLU_077692_0_0_1"/>
<dbReference type="InParanoid" id="P49919"/>
<dbReference type="OrthoDB" id="9940972at2759"/>
<dbReference type="TreeFam" id="TF101111"/>
<dbReference type="Reactome" id="R-MMU-187577">
    <property type="pathway name" value="SCF(Skp2)-mediated degradation of p27/p21"/>
</dbReference>
<dbReference type="Reactome" id="R-MMU-2559582">
    <property type="pathway name" value="Senescence-Associated Secretory Phenotype (SASP)"/>
</dbReference>
<dbReference type="Reactome" id="R-MMU-2559586">
    <property type="pathway name" value="DNA Damage/Telomere Stress Induced Senescence"/>
</dbReference>
<dbReference type="Reactome" id="R-MMU-6804116">
    <property type="pathway name" value="TP53 Regulates Transcription of Genes Involved in G1 Cell Cycle Arrest"/>
</dbReference>
<dbReference type="Reactome" id="R-MMU-69202">
    <property type="pathway name" value="Cyclin E associated events during G1/S transition"/>
</dbReference>
<dbReference type="Reactome" id="R-MMU-69231">
    <property type="pathway name" value="Cyclin D associated events in G1"/>
</dbReference>
<dbReference type="Reactome" id="R-MMU-69563">
    <property type="pathway name" value="p53-Dependent G1 DNA Damage Response"/>
</dbReference>
<dbReference type="Reactome" id="R-MMU-69656">
    <property type="pathway name" value="Cyclin A:Cdk2-associated events at S phase entry"/>
</dbReference>
<dbReference type="BioGRID-ORCS" id="12577">
    <property type="hits" value="0 hits in 78 CRISPR screens"/>
</dbReference>
<dbReference type="ChiTaRS" id="Cdkn1c">
    <property type="organism name" value="mouse"/>
</dbReference>
<dbReference type="PRO" id="PR:P49919"/>
<dbReference type="Proteomes" id="UP000000589">
    <property type="component" value="Chromosome 7"/>
</dbReference>
<dbReference type="RNAct" id="P49919">
    <property type="molecule type" value="protein"/>
</dbReference>
<dbReference type="Bgee" id="ENSMUSG00000037664">
    <property type="expression patterns" value="Expressed in humerus cartilage element and 266 other cell types or tissues"/>
</dbReference>
<dbReference type="ExpressionAtlas" id="P49919">
    <property type="expression patterns" value="baseline and differential"/>
</dbReference>
<dbReference type="GO" id="GO:0005737">
    <property type="term" value="C:cytoplasm"/>
    <property type="evidence" value="ECO:0007669"/>
    <property type="project" value="Ensembl"/>
</dbReference>
<dbReference type="GO" id="GO:0005634">
    <property type="term" value="C:nucleus"/>
    <property type="evidence" value="ECO:0000314"/>
    <property type="project" value="MGI"/>
</dbReference>
<dbReference type="GO" id="GO:0004861">
    <property type="term" value="F:cyclin-dependent protein serine/threonine kinase inhibitor activity"/>
    <property type="evidence" value="ECO:0007669"/>
    <property type="project" value="InterPro"/>
</dbReference>
<dbReference type="GO" id="GO:0044877">
    <property type="term" value="F:protein-containing complex binding"/>
    <property type="evidence" value="ECO:0007669"/>
    <property type="project" value="Ensembl"/>
</dbReference>
<dbReference type="GO" id="GO:0030325">
    <property type="term" value="P:adrenal gland development"/>
    <property type="evidence" value="ECO:0000315"/>
    <property type="project" value="MGI"/>
</dbReference>
<dbReference type="GO" id="GO:0043010">
    <property type="term" value="P:camera-type eye development"/>
    <property type="evidence" value="ECO:0000315"/>
    <property type="project" value="MGI"/>
</dbReference>
<dbReference type="GO" id="GO:0055123">
    <property type="term" value="P:digestive system development"/>
    <property type="evidence" value="ECO:0000315"/>
    <property type="project" value="MGI"/>
</dbReference>
<dbReference type="GO" id="GO:0060669">
    <property type="term" value="P:embryonic placenta morphogenesis"/>
    <property type="evidence" value="ECO:0000315"/>
    <property type="project" value="MGI"/>
</dbReference>
<dbReference type="GO" id="GO:0071514">
    <property type="term" value="P:genomic imprinting"/>
    <property type="evidence" value="ECO:0000315"/>
    <property type="project" value="MGI"/>
</dbReference>
<dbReference type="GO" id="GO:0001822">
    <property type="term" value="P:kidney development"/>
    <property type="evidence" value="ECO:0000315"/>
    <property type="project" value="MGI"/>
</dbReference>
<dbReference type="GO" id="GO:0035264">
    <property type="term" value="P:multicellular organism growth"/>
    <property type="evidence" value="ECO:0000315"/>
    <property type="project" value="MGI"/>
</dbReference>
<dbReference type="GO" id="GO:0030099">
    <property type="term" value="P:myeloid cell differentiation"/>
    <property type="evidence" value="ECO:0000316"/>
    <property type="project" value="MGI"/>
</dbReference>
<dbReference type="GO" id="GO:0050680">
    <property type="term" value="P:negative regulation of epithelial cell proliferation"/>
    <property type="evidence" value="ECO:0007669"/>
    <property type="project" value="Ensembl"/>
</dbReference>
<dbReference type="GO" id="GO:0042326">
    <property type="term" value="P:negative regulation of phosphorylation"/>
    <property type="evidence" value="ECO:0000314"/>
    <property type="project" value="UniProtKB"/>
</dbReference>
<dbReference type="GO" id="GO:0000122">
    <property type="term" value="P:negative regulation of transcription by RNA polymerase II"/>
    <property type="evidence" value="ECO:0000316"/>
    <property type="project" value="MGI"/>
</dbReference>
<dbReference type="GO" id="GO:0042551">
    <property type="term" value="P:neuron maturation"/>
    <property type="evidence" value="ECO:0000315"/>
    <property type="project" value="MGI"/>
</dbReference>
<dbReference type="GO" id="GO:0001890">
    <property type="term" value="P:placenta development"/>
    <property type="evidence" value="ECO:0000315"/>
    <property type="project" value="MGI"/>
</dbReference>
<dbReference type="GO" id="GO:0045893">
    <property type="term" value="P:positive regulation of DNA-templated transcription"/>
    <property type="evidence" value="ECO:0007669"/>
    <property type="project" value="Ensembl"/>
</dbReference>
<dbReference type="GO" id="GO:0030511">
    <property type="term" value="P:positive regulation of transforming growth factor beta receptor signaling pathway"/>
    <property type="evidence" value="ECO:0007669"/>
    <property type="project" value="Ensembl"/>
</dbReference>
<dbReference type="GO" id="GO:0007096">
    <property type="term" value="P:regulation of exit from mitosis"/>
    <property type="evidence" value="ECO:0000316"/>
    <property type="project" value="MGI"/>
</dbReference>
<dbReference type="GO" id="GO:1902746">
    <property type="term" value="P:regulation of lens fiber cell differentiation"/>
    <property type="evidence" value="ECO:0000316"/>
    <property type="project" value="MGI"/>
</dbReference>
<dbReference type="GO" id="GO:0001501">
    <property type="term" value="P:skeletal system development"/>
    <property type="evidence" value="ECO:0000315"/>
    <property type="project" value="MGI"/>
</dbReference>
<dbReference type="GO" id="GO:0060065">
    <property type="term" value="P:uterus development"/>
    <property type="evidence" value="ECO:0000315"/>
    <property type="project" value="MGI"/>
</dbReference>
<dbReference type="FunFam" id="4.10.365.10:FF:000002">
    <property type="entry name" value="cyclin-dependent kinase inhibitor 1C"/>
    <property type="match status" value="1"/>
</dbReference>
<dbReference type="Gene3D" id="4.10.365.10">
    <property type="entry name" value="p27"/>
    <property type="match status" value="1"/>
</dbReference>
<dbReference type="InterPro" id="IPR003175">
    <property type="entry name" value="CDI_dom"/>
</dbReference>
<dbReference type="InterPro" id="IPR044898">
    <property type="entry name" value="CDI_dom_sf"/>
</dbReference>
<dbReference type="PANTHER" id="PTHR10265">
    <property type="entry name" value="CYCLIN-DEPENDENT KINASE INHIBITOR 1"/>
    <property type="match status" value="1"/>
</dbReference>
<dbReference type="PANTHER" id="PTHR10265:SF44">
    <property type="entry name" value="CYCLIN-DEPENDENT KINASE INHIBITOR 1C"/>
    <property type="match status" value="1"/>
</dbReference>
<dbReference type="Pfam" id="PF02234">
    <property type="entry name" value="CDI"/>
    <property type="match status" value="1"/>
</dbReference>
<comment type="function">
    <text>Potent tight-binding inhibitor of several G1 cyclin/CDK complexes (cyclin E-CDK2, cyclin D2-CDK4, and cyclin A-CDK2) and, to lesser extent, of the mitotic cyclin B-CDC2. Negative regulator of cell proliferation. May play a role in maintenance of the non-proliferative state throughout life.</text>
</comment>
<comment type="subunit">
    <text evidence="1">Interacts with PCNA.</text>
</comment>
<comment type="subcellular location">
    <subcellularLocation>
        <location>Nucleus</location>
    </subcellularLocation>
</comment>
<comment type="alternative products">
    <event type="alternative splicing"/>
    <isoform>
        <id>P49919-1</id>
        <name>KIP2a</name>
        <name>p57a</name>
        <sequence type="displayed"/>
    </isoform>
    <isoform>
        <id>P49919-2</id>
        <name>KIP2b</name>
        <name>p57b</name>
        <sequence type="described" ref="VSP_000868"/>
    </isoform>
</comment>
<comment type="tissue specificity">
    <text>Expressed in the heart, brain, lung, skeletal muscle, kidney, pancreas and testis. High levels are seen in the placenta while low levels are seen in the liver.</text>
</comment>
<comment type="similarity">
    <text evidence="4">Belongs to the CDI family.</text>
</comment>
<keyword id="KW-0025">Alternative splicing</keyword>
<keyword id="KW-0131">Cell cycle</keyword>
<keyword id="KW-0488">Methylation</keyword>
<keyword id="KW-0539">Nucleus</keyword>
<keyword id="KW-0649">Protein kinase inhibitor</keyword>
<keyword id="KW-1185">Reference proteome</keyword>
<organism>
    <name type="scientific">Mus musculus</name>
    <name type="common">Mouse</name>
    <dbReference type="NCBI Taxonomy" id="10090"/>
    <lineage>
        <taxon>Eukaryota</taxon>
        <taxon>Metazoa</taxon>
        <taxon>Chordata</taxon>
        <taxon>Craniata</taxon>
        <taxon>Vertebrata</taxon>
        <taxon>Euteleostomi</taxon>
        <taxon>Mammalia</taxon>
        <taxon>Eutheria</taxon>
        <taxon>Euarchontoglires</taxon>
        <taxon>Glires</taxon>
        <taxon>Rodentia</taxon>
        <taxon>Myomorpha</taxon>
        <taxon>Muroidea</taxon>
        <taxon>Muridae</taxon>
        <taxon>Murinae</taxon>
        <taxon>Mus</taxon>
        <taxon>Mus</taxon>
    </lineage>
</organism>
<protein>
    <recommendedName>
        <fullName>Cyclin-dependent kinase inhibitor 1C</fullName>
    </recommendedName>
    <alternativeName>
        <fullName>Cyclin-dependent kinase inhibitor p57</fullName>
    </alternativeName>
    <alternativeName>
        <fullName>p57Kip2</fullName>
    </alternativeName>
</protein>
<evidence type="ECO:0000250" key="1"/>
<evidence type="ECO:0000255" key="2"/>
<evidence type="ECO:0000256" key="3">
    <source>
        <dbReference type="SAM" id="MobiDB-lite"/>
    </source>
</evidence>
<evidence type="ECO:0000305" key="4"/>
<evidence type="ECO:0007744" key="5">
    <source>
    </source>
</evidence>